<keyword id="KW-0472">Membrane</keyword>
<keyword id="KW-1185">Reference proteome</keyword>
<keyword id="KW-0812">Transmembrane</keyword>
<keyword id="KW-1133">Transmembrane helix</keyword>
<proteinExistence type="inferred from homology"/>
<protein>
    <recommendedName>
        <fullName>Serpentine receptor class gamma-6</fullName>
        <shortName>Protein srg-6</shortName>
    </recommendedName>
</protein>
<comment type="subcellular location">
    <subcellularLocation>
        <location evidence="2">Membrane</location>
        <topology evidence="2">Multi-pass membrane protein</topology>
    </subcellularLocation>
</comment>
<comment type="similarity">
    <text evidence="2">Belongs to the nematode receptor-like protein srg family.</text>
</comment>
<reference key="1">
    <citation type="journal article" date="1998" name="Science">
        <title>Genome sequence of the nematode C. elegans: a platform for investigating biology.</title>
        <authorList>
            <consortium name="The C. elegans sequencing consortium"/>
        </authorList>
    </citation>
    <scope>NUCLEOTIDE SEQUENCE [LARGE SCALE GENOMIC DNA]</scope>
    <source>
        <strain>Bristol N2</strain>
    </source>
</reference>
<dbReference type="EMBL" id="FO080619">
    <property type="protein sequence ID" value="CCD65218.1"/>
    <property type="molecule type" value="Genomic_DNA"/>
</dbReference>
<dbReference type="PIR" id="T15559">
    <property type="entry name" value="T15559"/>
</dbReference>
<dbReference type="RefSeq" id="NP_001293633.1">
    <property type="nucleotide sequence ID" value="NM_001306704.1"/>
</dbReference>
<dbReference type="SMR" id="P54128"/>
<dbReference type="STRING" id="6239.T12A2.13.1"/>
<dbReference type="PaxDb" id="6239-T12A2.13"/>
<dbReference type="EnsemblMetazoa" id="T12A2.13.1">
    <property type="protein sequence ID" value="T12A2.13.1"/>
    <property type="gene ID" value="WBGene00005164"/>
</dbReference>
<dbReference type="GeneID" id="24104889"/>
<dbReference type="KEGG" id="cel:CELE_T12A2.13"/>
<dbReference type="UCSC" id="T12A2.13">
    <property type="organism name" value="c. elegans"/>
</dbReference>
<dbReference type="AGR" id="WB:WBGene00005164"/>
<dbReference type="CTD" id="24104889"/>
<dbReference type="WormBase" id="T12A2.13">
    <property type="protein sequence ID" value="CE07482"/>
    <property type="gene ID" value="WBGene00005164"/>
    <property type="gene designation" value="srg-6"/>
</dbReference>
<dbReference type="eggNOG" id="ENOG502TH98">
    <property type="taxonomic scope" value="Eukaryota"/>
</dbReference>
<dbReference type="GeneTree" id="ENSGT00970000195841"/>
<dbReference type="HOGENOM" id="CLU_061253_1_0_1"/>
<dbReference type="InParanoid" id="P54128"/>
<dbReference type="OMA" id="WFGTTAW"/>
<dbReference type="OrthoDB" id="5844349at2759"/>
<dbReference type="PhylomeDB" id="P54128"/>
<dbReference type="PRO" id="PR:P54128"/>
<dbReference type="Proteomes" id="UP000001940">
    <property type="component" value="Chromosome III"/>
</dbReference>
<dbReference type="GO" id="GO:0016020">
    <property type="term" value="C:membrane"/>
    <property type="evidence" value="ECO:0007669"/>
    <property type="project" value="UniProtKB-SubCell"/>
</dbReference>
<dbReference type="GO" id="GO:0004888">
    <property type="term" value="F:transmembrane signaling receptor activity"/>
    <property type="evidence" value="ECO:0007669"/>
    <property type="project" value="InterPro"/>
</dbReference>
<dbReference type="GO" id="GO:0007606">
    <property type="term" value="P:sensory perception of chemical stimulus"/>
    <property type="evidence" value="ECO:0007669"/>
    <property type="project" value="InterPro"/>
</dbReference>
<dbReference type="InterPro" id="IPR000609">
    <property type="entry name" value="7TM_GPCR_serpentine_rcpt_Srg"/>
</dbReference>
<dbReference type="InterPro" id="IPR051119">
    <property type="entry name" value="Nematode_SR-like"/>
</dbReference>
<dbReference type="PANTHER" id="PTHR31627:SF8">
    <property type="entry name" value="SERPENTINE RECEPTOR CLASS GAMMA-6-RELATED"/>
    <property type="match status" value="1"/>
</dbReference>
<dbReference type="PANTHER" id="PTHR31627">
    <property type="entry name" value="SERPENTINE RECEPTOR CLASS GAMMA-RELATED"/>
    <property type="match status" value="1"/>
</dbReference>
<dbReference type="Pfam" id="PF02118">
    <property type="entry name" value="Srg"/>
    <property type="match status" value="1"/>
</dbReference>
<dbReference type="PRINTS" id="PR00698">
    <property type="entry name" value="TMPROTEINSRG"/>
</dbReference>
<feature type="chain" id="PRO_0000104556" description="Serpentine receptor class gamma-6">
    <location>
        <begin position="1"/>
        <end position="311"/>
    </location>
</feature>
<feature type="transmembrane region" description="Helical" evidence="1">
    <location>
        <begin position="24"/>
        <end position="44"/>
    </location>
</feature>
<feature type="transmembrane region" description="Helical" evidence="1">
    <location>
        <begin position="58"/>
        <end position="78"/>
    </location>
</feature>
<feature type="transmembrane region" description="Helical" evidence="1">
    <location>
        <begin position="101"/>
        <end position="121"/>
    </location>
</feature>
<feature type="transmembrane region" description="Helical" evidence="1">
    <location>
        <begin position="148"/>
        <end position="168"/>
    </location>
</feature>
<feature type="transmembrane region" description="Helical" evidence="1">
    <location>
        <begin position="200"/>
        <end position="220"/>
    </location>
</feature>
<feature type="transmembrane region" description="Helical" evidence="1">
    <location>
        <begin position="235"/>
        <end position="255"/>
    </location>
</feature>
<feature type="transmembrane region" description="Helical" evidence="1">
    <location>
        <begin position="266"/>
        <end position="286"/>
    </location>
</feature>
<name>SRG6_CAEEL</name>
<gene>
    <name type="primary">srg-6</name>
    <name type="ORF">T12A2.13</name>
</gene>
<accession>P54128</accession>
<evidence type="ECO:0000255" key="1"/>
<evidence type="ECO:0000305" key="2"/>
<organism>
    <name type="scientific">Caenorhabditis elegans</name>
    <dbReference type="NCBI Taxonomy" id="6239"/>
    <lineage>
        <taxon>Eukaryota</taxon>
        <taxon>Metazoa</taxon>
        <taxon>Ecdysozoa</taxon>
        <taxon>Nematoda</taxon>
        <taxon>Chromadorea</taxon>
        <taxon>Rhabditida</taxon>
        <taxon>Rhabditina</taxon>
        <taxon>Rhabditomorpha</taxon>
        <taxon>Rhabditoidea</taxon>
        <taxon>Rhabditidae</taxon>
        <taxon>Peloderinae</taxon>
        <taxon>Caenorhabditis</taxon>
    </lineage>
</organism>
<sequence>MANSTSFLGCSRFYATFEENLKLMGQLVYLIPSFILISKMIYVIQVKHRGDYHEQRRFWLLYTMDLALSLLNLFFDIFYYRLTLFVPQICESFSFFLRANPLLIDITYPLWFYFHVGKMVAQMSISFERMTFNLLKPNDYRRIWKHGLTACVIMIIFVPFSIIWNILISDKYIQFYFGGFQPNYSRRVNWFGTTAWQLTYMQISMAVTLLSNIVTGAILWKSQNQSRKSRLLCRIWFAISTEYLLSACAFCYLHMKTFAFDYSNLIFMLVIFVWDGFNILSPVIMISMNKSLRKQVFAMSGGSEDLEISVA</sequence>